<organism>
    <name type="scientific">Porphyromonas gingivalis (strain ATCC BAA-308 / W83)</name>
    <dbReference type="NCBI Taxonomy" id="242619"/>
    <lineage>
        <taxon>Bacteria</taxon>
        <taxon>Pseudomonadati</taxon>
        <taxon>Bacteroidota</taxon>
        <taxon>Bacteroidia</taxon>
        <taxon>Bacteroidales</taxon>
        <taxon>Porphyromonadaceae</taxon>
        <taxon>Porphyromonas</taxon>
    </lineage>
</organism>
<accession>Q7MWN8</accession>
<gene>
    <name type="ordered locus">PG_0562</name>
</gene>
<proteinExistence type="inferred from homology"/>
<dbReference type="EMBL" id="AE015924">
    <property type="protein sequence ID" value="AAQ65751.1"/>
    <property type="molecule type" value="Genomic_DNA"/>
</dbReference>
<dbReference type="RefSeq" id="WP_005874031.1">
    <property type="nucleotide sequence ID" value="NC_002950.2"/>
</dbReference>
<dbReference type="SMR" id="Q7MWN8"/>
<dbReference type="EnsemblBacteria" id="AAQ65751">
    <property type="protein sequence ID" value="AAQ65751"/>
    <property type="gene ID" value="PG_0562"/>
</dbReference>
<dbReference type="KEGG" id="pgi:PG_0562"/>
<dbReference type="PATRIC" id="fig|242619.8.peg.514"/>
<dbReference type="eggNOG" id="COG0569">
    <property type="taxonomic scope" value="Bacteria"/>
</dbReference>
<dbReference type="eggNOG" id="COG2985">
    <property type="taxonomic scope" value="Bacteria"/>
</dbReference>
<dbReference type="HOGENOM" id="CLU_035023_3_1_10"/>
<dbReference type="BioCyc" id="PGIN242619:G1G02-522-MONOMER"/>
<dbReference type="Proteomes" id="UP000000588">
    <property type="component" value="Chromosome"/>
</dbReference>
<dbReference type="GO" id="GO:0005886">
    <property type="term" value="C:plasma membrane"/>
    <property type="evidence" value="ECO:0007669"/>
    <property type="project" value="UniProtKB-SubCell"/>
</dbReference>
<dbReference type="GO" id="GO:0008324">
    <property type="term" value="F:monoatomic cation transmembrane transporter activity"/>
    <property type="evidence" value="ECO:0007669"/>
    <property type="project" value="InterPro"/>
</dbReference>
<dbReference type="GO" id="GO:0006813">
    <property type="term" value="P:potassium ion transport"/>
    <property type="evidence" value="ECO:0007669"/>
    <property type="project" value="InterPro"/>
</dbReference>
<dbReference type="Gene3D" id="3.30.70.1450">
    <property type="entry name" value="Regulator of K+ conductance, C-terminal domain"/>
    <property type="match status" value="2"/>
</dbReference>
<dbReference type="InterPro" id="IPR050144">
    <property type="entry name" value="AAE_transporter"/>
</dbReference>
<dbReference type="InterPro" id="IPR006037">
    <property type="entry name" value="RCK_C"/>
</dbReference>
<dbReference type="InterPro" id="IPR036721">
    <property type="entry name" value="RCK_C_sf"/>
</dbReference>
<dbReference type="InterPro" id="IPR006512">
    <property type="entry name" value="YidE_YbjL"/>
</dbReference>
<dbReference type="NCBIfam" id="NF003007">
    <property type="entry name" value="PRK03818.1"/>
    <property type="match status" value="1"/>
</dbReference>
<dbReference type="NCBIfam" id="TIGR01625">
    <property type="entry name" value="YidE_YbjL_dupl"/>
    <property type="match status" value="2"/>
</dbReference>
<dbReference type="PANTHER" id="PTHR30445">
    <property type="entry name" value="K(+)_H(+) ANTIPORTER SUBUNIT KHTT"/>
    <property type="match status" value="1"/>
</dbReference>
<dbReference type="PANTHER" id="PTHR30445:SF3">
    <property type="entry name" value="TRANSPORT PROTEIN YIDE-RELATED"/>
    <property type="match status" value="1"/>
</dbReference>
<dbReference type="Pfam" id="PF06826">
    <property type="entry name" value="Asp-Al_Ex"/>
    <property type="match status" value="2"/>
</dbReference>
<dbReference type="Pfam" id="PF02080">
    <property type="entry name" value="TrkA_C"/>
    <property type="match status" value="1"/>
</dbReference>
<dbReference type="SUPFAM" id="SSF116726">
    <property type="entry name" value="TrkA C-terminal domain-like"/>
    <property type="match status" value="2"/>
</dbReference>
<dbReference type="PROSITE" id="PS51202">
    <property type="entry name" value="RCK_C"/>
    <property type="match status" value="2"/>
</dbReference>
<feature type="chain" id="PRO_0000208776" description="Uncharacterized transporter PG_0562">
    <location>
        <begin position="1"/>
        <end position="558"/>
    </location>
</feature>
<feature type="transmembrane region" description="Helical" evidence="1">
    <location>
        <begin position="15"/>
        <end position="32"/>
    </location>
</feature>
<feature type="transmembrane region" description="Helical" evidence="1">
    <location>
        <begin position="39"/>
        <end position="61"/>
    </location>
</feature>
<feature type="transmembrane region" description="Helical" evidence="1">
    <location>
        <begin position="76"/>
        <end position="95"/>
    </location>
</feature>
<feature type="transmembrane region" description="Helical" evidence="1">
    <location>
        <begin position="104"/>
        <end position="126"/>
    </location>
</feature>
<feature type="transmembrane region" description="Helical" evidence="1">
    <location>
        <begin position="166"/>
        <end position="188"/>
    </location>
</feature>
<feature type="transmembrane region" description="Helical" evidence="1">
    <location>
        <begin position="383"/>
        <end position="405"/>
    </location>
</feature>
<feature type="transmembrane region" description="Helical" evidence="1">
    <location>
        <begin position="409"/>
        <end position="426"/>
    </location>
</feature>
<feature type="transmembrane region" description="Helical" evidence="1">
    <location>
        <begin position="446"/>
        <end position="468"/>
    </location>
</feature>
<feature type="transmembrane region" description="Helical" evidence="1">
    <location>
        <begin position="473"/>
        <end position="495"/>
    </location>
</feature>
<feature type="transmembrane region" description="Helical" evidence="1">
    <location>
        <begin position="533"/>
        <end position="555"/>
    </location>
</feature>
<feature type="domain" description="RCK C-terminal 1" evidence="2">
    <location>
        <begin position="196"/>
        <end position="278"/>
    </location>
</feature>
<feature type="domain" description="RCK C-terminal 2" evidence="2">
    <location>
        <begin position="286"/>
        <end position="370"/>
    </location>
</feature>
<name>Y562_PORGI</name>
<comment type="subcellular location">
    <subcellularLocation>
        <location evidence="3">Cell membrane</location>
        <topology evidence="3">Multi-pass membrane protein</topology>
    </subcellularLocation>
</comment>
<comment type="similarity">
    <text evidence="3">Belongs to the AAE transporter (TC 2.A.81) family.</text>
</comment>
<keyword id="KW-1003">Cell membrane</keyword>
<keyword id="KW-0472">Membrane</keyword>
<keyword id="KW-1185">Reference proteome</keyword>
<keyword id="KW-0677">Repeat</keyword>
<keyword id="KW-0812">Transmembrane</keyword>
<keyword id="KW-1133">Transmembrane helix</keyword>
<keyword id="KW-0813">Transport</keyword>
<evidence type="ECO:0000255" key="1"/>
<evidence type="ECO:0000255" key="2">
    <source>
        <dbReference type="PROSITE-ProRule" id="PRU00544"/>
    </source>
</evidence>
<evidence type="ECO:0000305" key="3"/>
<reference key="1">
    <citation type="journal article" date="2003" name="J. Bacteriol.">
        <title>Complete genome sequence of the oral pathogenic bacterium Porphyromonas gingivalis strain W83.</title>
        <authorList>
            <person name="Nelson K.E."/>
            <person name="Fleischmann R.D."/>
            <person name="DeBoy R.T."/>
            <person name="Paulsen I.T."/>
            <person name="Fouts D.E."/>
            <person name="Eisen J.A."/>
            <person name="Daugherty S.C."/>
            <person name="Dodson R.J."/>
            <person name="Durkin A.S."/>
            <person name="Gwinn M.L."/>
            <person name="Haft D.H."/>
            <person name="Kolonay J.F."/>
            <person name="Nelson W.C."/>
            <person name="Mason T.M."/>
            <person name="Tallon L."/>
            <person name="Gray J."/>
            <person name="Granger D."/>
            <person name="Tettelin H."/>
            <person name="Dong H."/>
            <person name="Galvin J.L."/>
            <person name="Duncan M.J."/>
            <person name="Dewhirst F.E."/>
            <person name="Fraser C.M."/>
        </authorList>
    </citation>
    <scope>NUCLEOTIDE SEQUENCE [LARGE SCALE GENOMIC DNA]</scope>
    <source>
        <strain>ATCC BAA-308 / W83</strain>
    </source>
</reference>
<sequence>MDAIVLWLREVFLEPSVTQTIIILSLVCALGLQLGKLRIGTISLGITFVFFVGILASHFGVTTDPVMLTFAQNFGLVIFVYALGLQVGPSFFPSLKKGGIAQNLISLGLVLLTFLLCILLYYILGISMPNLMGIVAGATTNTPALGAAQTTLHQINPDATAEMAEMALACAVTYPLGVVGVIIALALLKVMMPKVEERDDSEAPKAFFSEYEICNPALDGKSVREVALLLKRPFVITRVWHNGKVEIPTSDMILYFGDHILAVSGEEDTSQLEILFGKREMKDWNRPDIDWNSVDKQLVSRRLVITRPKLNGVRLGMLKIRNLYGVNISRVDRAGVELLPDRDLRLQLGDRLTVVGEGKAVERVAEILGDEVKQLDNPHLTTLFGGLVLGCVFGMIPFYLPGVSMPIKLGLAGGPIIIGILMGAFGPRFHLTTYVTNSANLLLRQFGIILYLGGLGLASGANFFDTIIHGDGLLWVGAGFLITMLPTLLVGWASIKLLRNRYDGTAGMICGSTANPMALDYVNSQLKGDGASVVYATVYPLSMFVRIIFAQIMILIFA</sequence>
<protein>
    <recommendedName>
        <fullName>Uncharacterized transporter PG_0562</fullName>
    </recommendedName>
</protein>